<evidence type="ECO:0000250" key="1">
    <source>
        <dbReference type="UniProtKB" id="P03905"/>
    </source>
</evidence>
<evidence type="ECO:0000250" key="2">
    <source>
        <dbReference type="UniProtKB" id="P03910"/>
    </source>
</evidence>
<evidence type="ECO:0000255" key="3"/>
<evidence type="ECO:0000305" key="4"/>
<gene>
    <name type="primary">MT-ND4</name>
    <name type="synonym">MTND4</name>
    <name type="synonym">NADH4</name>
    <name type="synonym">ND4</name>
</gene>
<proteinExistence type="inferred from homology"/>
<organism>
    <name type="scientific">Bos mutus grunniens</name>
    <name type="common">Wild yak</name>
    <name type="synonym">Bos grunniens</name>
    <dbReference type="NCBI Taxonomy" id="30521"/>
    <lineage>
        <taxon>Eukaryota</taxon>
        <taxon>Metazoa</taxon>
        <taxon>Chordata</taxon>
        <taxon>Craniata</taxon>
        <taxon>Vertebrata</taxon>
        <taxon>Euteleostomi</taxon>
        <taxon>Mammalia</taxon>
        <taxon>Eutheria</taxon>
        <taxon>Laurasiatheria</taxon>
        <taxon>Artiodactyla</taxon>
        <taxon>Ruminantia</taxon>
        <taxon>Pecora</taxon>
        <taxon>Bovidae</taxon>
        <taxon>Bovinae</taxon>
        <taxon>Bos</taxon>
    </lineage>
</organism>
<reference key="1">
    <citation type="submission" date="2004-10" db="EMBL/GenBank/DDBJ databases">
        <title>Complete sequence of the Yak (Bos grunniens.) mitochondrial genome and its genetic relationship with related species.</title>
        <authorList>
            <person name="Gu Z."/>
            <person name="Zhao X."/>
            <person name="Li N."/>
            <person name="Wu C."/>
        </authorList>
    </citation>
    <scope>NUCLEOTIDE SEQUENCE [GENOMIC DNA]</scope>
</reference>
<dbReference type="EC" id="7.1.1.2" evidence="1"/>
<dbReference type="EMBL" id="AY684273">
    <property type="protein sequence ID" value="AAU89115.1"/>
    <property type="molecule type" value="Genomic_DNA"/>
</dbReference>
<dbReference type="SMR" id="Q5Y4Q1"/>
<dbReference type="Proteomes" id="UP000694520">
    <property type="component" value="Unplaced"/>
</dbReference>
<dbReference type="GO" id="GO:0005743">
    <property type="term" value="C:mitochondrial inner membrane"/>
    <property type="evidence" value="ECO:0000250"/>
    <property type="project" value="UniProtKB"/>
</dbReference>
<dbReference type="GO" id="GO:0008137">
    <property type="term" value="F:NADH dehydrogenase (ubiquinone) activity"/>
    <property type="evidence" value="ECO:0000250"/>
    <property type="project" value="UniProtKB"/>
</dbReference>
<dbReference type="GO" id="GO:0048039">
    <property type="term" value="F:ubiquinone binding"/>
    <property type="evidence" value="ECO:0007669"/>
    <property type="project" value="TreeGrafter"/>
</dbReference>
<dbReference type="GO" id="GO:0015990">
    <property type="term" value="P:electron transport coupled proton transport"/>
    <property type="evidence" value="ECO:0007669"/>
    <property type="project" value="TreeGrafter"/>
</dbReference>
<dbReference type="GO" id="GO:0006120">
    <property type="term" value="P:mitochondrial electron transport, NADH to ubiquinone"/>
    <property type="evidence" value="ECO:0000250"/>
    <property type="project" value="UniProtKB"/>
</dbReference>
<dbReference type="GO" id="GO:0032981">
    <property type="term" value="P:mitochondrial respiratory chain complex I assembly"/>
    <property type="evidence" value="ECO:0000250"/>
    <property type="project" value="UniProtKB"/>
</dbReference>
<dbReference type="InterPro" id="IPR000260">
    <property type="entry name" value="NADH4_N"/>
</dbReference>
<dbReference type="InterPro" id="IPR010227">
    <property type="entry name" value="NADH_Q_OxRdtase_chainM/4"/>
</dbReference>
<dbReference type="InterPro" id="IPR003918">
    <property type="entry name" value="NADH_UbQ_OxRdtase"/>
</dbReference>
<dbReference type="InterPro" id="IPR001750">
    <property type="entry name" value="ND/Mrp_TM"/>
</dbReference>
<dbReference type="NCBIfam" id="TIGR01972">
    <property type="entry name" value="NDH_I_M"/>
    <property type="match status" value="1"/>
</dbReference>
<dbReference type="PANTHER" id="PTHR43507">
    <property type="entry name" value="NADH-UBIQUINONE OXIDOREDUCTASE CHAIN 4"/>
    <property type="match status" value="1"/>
</dbReference>
<dbReference type="PANTHER" id="PTHR43507:SF20">
    <property type="entry name" value="NADH-UBIQUINONE OXIDOREDUCTASE CHAIN 4"/>
    <property type="match status" value="1"/>
</dbReference>
<dbReference type="Pfam" id="PF01059">
    <property type="entry name" value="Oxidored_q5_N"/>
    <property type="match status" value="1"/>
</dbReference>
<dbReference type="Pfam" id="PF00361">
    <property type="entry name" value="Proton_antipo_M"/>
    <property type="match status" value="1"/>
</dbReference>
<dbReference type="PRINTS" id="PR01437">
    <property type="entry name" value="NUOXDRDTASE4"/>
</dbReference>
<protein>
    <recommendedName>
        <fullName>NADH-ubiquinone oxidoreductase chain 4</fullName>
        <ecNumber evidence="1">7.1.1.2</ecNumber>
    </recommendedName>
    <alternativeName>
        <fullName>NADH dehydrogenase subunit 4</fullName>
    </alternativeName>
</protein>
<feature type="chain" id="PRO_0000253521" description="NADH-ubiquinone oxidoreductase chain 4">
    <location>
        <begin position="1"/>
        <end position="459"/>
    </location>
</feature>
<feature type="transmembrane region" description="Helical" evidence="3">
    <location>
        <begin position="20"/>
        <end position="42"/>
    </location>
</feature>
<feature type="transmembrane region" description="Helical" evidence="3">
    <location>
        <begin position="60"/>
        <end position="80"/>
    </location>
</feature>
<feature type="transmembrane region" description="Helical" evidence="3">
    <location>
        <begin position="98"/>
        <end position="118"/>
    </location>
</feature>
<feature type="transmembrane region" description="Helical" evidence="3">
    <location>
        <begin position="147"/>
        <end position="167"/>
    </location>
</feature>
<feature type="transmembrane region" description="Helical" evidence="3">
    <location>
        <begin position="193"/>
        <end position="213"/>
    </location>
</feature>
<feature type="transmembrane region" description="Helical" evidence="3">
    <location>
        <begin position="224"/>
        <end position="244"/>
    </location>
</feature>
<feature type="transmembrane region" description="Helical" evidence="3">
    <location>
        <begin position="256"/>
        <end position="276"/>
    </location>
</feature>
<feature type="transmembrane region" description="Helical" evidence="3">
    <location>
        <begin position="285"/>
        <end position="307"/>
    </location>
</feature>
<feature type="transmembrane region" description="Helical" evidence="3">
    <location>
        <begin position="312"/>
        <end position="334"/>
    </location>
</feature>
<feature type="transmembrane region" description="Helical" evidence="3">
    <location>
        <begin position="351"/>
        <end position="371"/>
    </location>
</feature>
<feature type="transmembrane region" description="Helical" evidence="3">
    <location>
        <begin position="393"/>
        <end position="413"/>
    </location>
</feature>
<feature type="transmembrane region" description="Helical" evidence="3">
    <location>
        <begin position="435"/>
        <end position="455"/>
    </location>
</feature>
<accession>Q5Y4Q1</accession>
<keyword id="KW-0249">Electron transport</keyword>
<keyword id="KW-0472">Membrane</keyword>
<keyword id="KW-0496">Mitochondrion</keyword>
<keyword id="KW-0999">Mitochondrion inner membrane</keyword>
<keyword id="KW-0520">NAD</keyword>
<keyword id="KW-1185">Reference proteome</keyword>
<keyword id="KW-0679">Respiratory chain</keyword>
<keyword id="KW-1278">Translocase</keyword>
<keyword id="KW-0812">Transmembrane</keyword>
<keyword id="KW-1133">Transmembrane helix</keyword>
<keyword id="KW-0813">Transport</keyword>
<keyword id="KW-0830">Ubiquinone</keyword>
<name>NU4M_BOSMU</name>
<sequence>MLKYIIPTIMLMPLTWMSKGNMIWINSTTHSLLISFTSLLLMNQFGDNSLNFSLMFFSDSLSTPLLILTMWLLPLMLMASQHHLSKENLTRKKLFITMLILLQLFLIMTFTAMELIFFYILFEATLVPTLIIITRWGNQTERLNAGLYFLFYTLAGSLPLLVALIYIQNMVGSLNFLMLQYWVQPMHNSWSNIFMWLACMMAFMVKMPLYGLHLWLPKAHVEAPIAGSMVLAAILLKLGGYGMLRITLILNPMTDFMAYPFIMLSLWGMIMTSSICLRQTDLKSLIGYSSVSHMALVIVAILIQTPWSYMGATALMIAHGLTSSMLFCLANSNYERIHSRTMILARGLQTLLPLMATWWLLASLTNLALPPTINLIGELFVMMSTFSWSNITIILMGMNMVIPALYSLYMLIMTQRGKYTYHINNISPSFTRENALMSLHILPLLLLSLNPKIILGPLY</sequence>
<comment type="function">
    <text evidence="1">Core subunit of the mitochondrial membrane respiratory chain NADH dehydrogenase (Complex I) which catalyzes electron transfer from NADH through the respiratory chain, using ubiquinone as an electron acceptor. Essential for the catalytic activity and assembly of complex I.</text>
</comment>
<comment type="catalytic activity">
    <reaction evidence="1">
        <text>a ubiquinone + NADH + 5 H(+)(in) = a ubiquinol + NAD(+) + 4 H(+)(out)</text>
        <dbReference type="Rhea" id="RHEA:29091"/>
        <dbReference type="Rhea" id="RHEA-COMP:9565"/>
        <dbReference type="Rhea" id="RHEA-COMP:9566"/>
        <dbReference type="ChEBI" id="CHEBI:15378"/>
        <dbReference type="ChEBI" id="CHEBI:16389"/>
        <dbReference type="ChEBI" id="CHEBI:17976"/>
        <dbReference type="ChEBI" id="CHEBI:57540"/>
        <dbReference type="ChEBI" id="CHEBI:57945"/>
        <dbReference type="EC" id="7.1.1.2"/>
    </reaction>
</comment>
<comment type="subunit">
    <text evidence="2">Core subunit of respiratory chain NADH dehydrogenase (Complex I) which is composed of 45 different subunits.</text>
</comment>
<comment type="subcellular location">
    <subcellularLocation>
        <location evidence="2">Mitochondrion inner membrane</location>
        <topology evidence="3">Multi-pass membrane protein</topology>
    </subcellularLocation>
</comment>
<comment type="similarity">
    <text evidence="4">Belongs to the complex I subunit 4 family.</text>
</comment>
<geneLocation type="mitochondrion"/>